<comment type="function">
    <text evidence="1">Associates with the EF-Tu.GDP complex and induces the exchange of GDP to GTP. It remains bound to the aminoacyl-tRNA.EF-Tu.GTP complex up to the GTP hydrolysis stage on the ribosome.</text>
</comment>
<comment type="subcellular location">
    <subcellularLocation>
        <location evidence="1">Cytoplasm</location>
    </subcellularLocation>
</comment>
<comment type="similarity">
    <text evidence="1">Belongs to the EF-Ts family.</text>
</comment>
<keyword id="KW-0963">Cytoplasm</keyword>
<keyword id="KW-0251">Elongation factor</keyword>
<keyword id="KW-0648">Protein biosynthesis</keyword>
<evidence type="ECO:0000255" key="1">
    <source>
        <dbReference type="HAMAP-Rule" id="MF_00050"/>
    </source>
</evidence>
<dbReference type="EMBL" id="CP000605">
    <property type="protein sequence ID" value="ACD97850.1"/>
    <property type="molecule type" value="Genomic_DNA"/>
</dbReference>
<dbReference type="RefSeq" id="WP_007052754.1">
    <property type="nucleotide sequence ID" value="NZ_AABM02000001.1"/>
</dbReference>
<dbReference type="SMR" id="B3DRT1"/>
<dbReference type="GeneID" id="69578356"/>
<dbReference type="KEGG" id="blj:BLD_0404"/>
<dbReference type="HOGENOM" id="CLU_047155_0_0_11"/>
<dbReference type="Proteomes" id="UP000002419">
    <property type="component" value="Chromosome"/>
</dbReference>
<dbReference type="GO" id="GO:0005737">
    <property type="term" value="C:cytoplasm"/>
    <property type="evidence" value="ECO:0007669"/>
    <property type="project" value="UniProtKB-SubCell"/>
</dbReference>
<dbReference type="GO" id="GO:0003746">
    <property type="term" value="F:translation elongation factor activity"/>
    <property type="evidence" value="ECO:0007669"/>
    <property type="project" value="UniProtKB-UniRule"/>
</dbReference>
<dbReference type="CDD" id="cd14275">
    <property type="entry name" value="UBA_EF-Ts"/>
    <property type="match status" value="1"/>
</dbReference>
<dbReference type="FunFam" id="1.10.286.20:FF:000001">
    <property type="entry name" value="Elongation factor Ts"/>
    <property type="match status" value="1"/>
</dbReference>
<dbReference type="FunFam" id="1.10.8.10:FF:000001">
    <property type="entry name" value="Elongation factor Ts"/>
    <property type="match status" value="1"/>
</dbReference>
<dbReference type="Gene3D" id="1.10.286.20">
    <property type="match status" value="1"/>
</dbReference>
<dbReference type="Gene3D" id="1.10.8.10">
    <property type="entry name" value="DNA helicase RuvA subunit, C-terminal domain"/>
    <property type="match status" value="1"/>
</dbReference>
<dbReference type="Gene3D" id="3.30.479.20">
    <property type="entry name" value="Elongation factor Ts, dimerisation domain"/>
    <property type="match status" value="2"/>
</dbReference>
<dbReference type="HAMAP" id="MF_00050">
    <property type="entry name" value="EF_Ts"/>
    <property type="match status" value="1"/>
</dbReference>
<dbReference type="InterPro" id="IPR036402">
    <property type="entry name" value="EF-Ts_dimer_sf"/>
</dbReference>
<dbReference type="InterPro" id="IPR001816">
    <property type="entry name" value="Transl_elong_EFTs/EF1B"/>
</dbReference>
<dbReference type="InterPro" id="IPR014039">
    <property type="entry name" value="Transl_elong_EFTs/EF1B_dimer"/>
</dbReference>
<dbReference type="InterPro" id="IPR018101">
    <property type="entry name" value="Transl_elong_Ts_CS"/>
</dbReference>
<dbReference type="InterPro" id="IPR009060">
    <property type="entry name" value="UBA-like_sf"/>
</dbReference>
<dbReference type="NCBIfam" id="TIGR00116">
    <property type="entry name" value="tsf"/>
    <property type="match status" value="1"/>
</dbReference>
<dbReference type="PANTHER" id="PTHR11741">
    <property type="entry name" value="ELONGATION FACTOR TS"/>
    <property type="match status" value="1"/>
</dbReference>
<dbReference type="PANTHER" id="PTHR11741:SF0">
    <property type="entry name" value="ELONGATION FACTOR TS, MITOCHONDRIAL"/>
    <property type="match status" value="1"/>
</dbReference>
<dbReference type="Pfam" id="PF00889">
    <property type="entry name" value="EF_TS"/>
    <property type="match status" value="1"/>
</dbReference>
<dbReference type="SUPFAM" id="SSF54713">
    <property type="entry name" value="Elongation factor Ts (EF-Ts), dimerisation domain"/>
    <property type="match status" value="1"/>
</dbReference>
<dbReference type="SUPFAM" id="SSF46934">
    <property type="entry name" value="UBA-like"/>
    <property type="match status" value="1"/>
</dbReference>
<dbReference type="PROSITE" id="PS01127">
    <property type="entry name" value="EF_TS_2"/>
    <property type="match status" value="1"/>
</dbReference>
<accession>B3DRT1</accession>
<gene>
    <name evidence="1" type="primary">tsf</name>
    <name type="ordered locus">BLD_0404</name>
</gene>
<proteinExistence type="inferred from homology"/>
<reference key="1">
    <citation type="journal article" date="2008" name="BMC Genomics">
        <title>Comparative genomic analysis of the gut bacterium Bifidobacterium longum reveals loci susceptible to deletion during pure culture growth.</title>
        <authorList>
            <person name="Lee J.H."/>
            <person name="Karamychev V.N."/>
            <person name="Kozyavkin S.A."/>
            <person name="Mills D."/>
            <person name="Pavlov A.R."/>
            <person name="Pavlova N.V."/>
            <person name="Polouchine N.N."/>
            <person name="Richardson P.M."/>
            <person name="Shakhova V.V."/>
            <person name="Slesarev A.I."/>
            <person name="Weimer B."/>
            <person name="O'Sullivan D.J."/>
        </authorList>
    </citation>
    <scope>NUCLEOTIDE SEQUENCE [LARGE SCALE GENOMIC DNA]</scope>
    <source>
        <strain>DJO10A</strain>
    </source>
</reference>
<organism>
    <name type="scientific">Bifidobacterium longum (strain DJO10A)</name>
    <dbReference type="NCBI Taxonomy" id="205913"/>
    <lineage>
        <taxon>Bacteria</taxon>
        <taxon>Bacillati</taxon>
        <taxon>Actinomycetota</taxon>
        <taxon>Actinomycetes</taxon>
        <taxon>Bifidobacteriales</taxon>
        <taxon>Bifidobacteriaceae</taxon>
        <taxon>Bifidobacterium</taxon>
    </lineage>
</organism>
<feature type="chain" id="PRO_1000116694" description="Elongation factor Ts">
    <location>
        <begin position="1"/>
        <end position="283"/>
    </location>
</feature>
<feature type="region of interest" description="Involved in Mg(2+) ion dislocation from EF-Tu" evidence="1">
    <location>
        <begin position="84"/>
        <end position="87"/>
    </location>
</feature>
<name>EFTS_BIFLD</name>
<sequence>MAAITAALIKQVREDTGAGMLDVKKALTEAEGDVARAKEIIRAKGIAAAGKREGRKAQEGTIASKVVETANGETGYAVELNSETDFVAKTPKFVEFTEEVLGYAVDADANSADELLEAKAGDTTVKLAVEEAAALFGEHVKVGQFAKISGEHVEVYAHKKSAEMPPSIVAMIATDKAGAAVAHEAALQISAMGAKWLTREDVPADVVESERRVATEKSLAEGKPEKIVPKIVEGRLNAFFKEVVLLEQPFVKDPSKTVGDLFKEVGGNATAFARVEVGKGEEE</sequence>
<protein>
    <recommendedName>
        <fullName evidence="1">Elongation factor Ts</fullName>
        <shortName evidence="1">EF-Ts</shortName>
    </recommendedName>
</protein>